<protein>
    <recommendedName>
        <fullName evidence="3">PRAME family member 2</fullName>
    </recommendedName>
</protein>
<sequence>MSIQAPPRLLELAGQSLLRDQALSISAMEELPRVLYLPLFREAFSRRHFQTLTVMVQAWPFTCLPLVSLMKTLHLEPLKALLEGLHMLLTQKDRPRRWKLQVLDLRDVDENFWARWPGAWALSCFPEAMSKRQTAEDCPRTGEHQPLKVFIDICLKEIPQDECLRYLFQWVYQRRGLVHLCCSKLVNYLTPIKYLRKSLKIIYINSIGELEIHNTCWPHLIRKLYCYLKEMKTLCKLVFSRCHHYTSDNELEGWLVTRFTSVFLRLEHLQLLKIKLITFFSGHLEQLIRCLQNPLENLELTCGNLLEEDLKCLSQFPSLGYLKHLNLSYVLLFRISLEPLGALLEKIAASLETLVLEGCQIHYSQLSAILPGLSCCSQLTTFYFGSNCMSIDALKDLLRHTSGLSKLSLETYPAPEESLNSLVRVNWEIFTPLRAELMCTLREFRQPKRIFIGPTPCPSCGSSPSEELELHLCC</sequence>
<keyword id="KW-0433">Leucine-rich repeat</keyword>
<keyword id="KW-1185">Reference proteome</keyword>
<keyword id="KW-0677">Repeat</keyword>
<accession>O60811</accession>
<gene>
    <name evidence="3" type="primary">PRAMEF2</name>
</gene>
<dbReference type="EMBL" id="AL049674">
    <property type="protein sequence ID" value="CAB41247.1"/>
    <property type="molecule type" value="mRNA"/>
</dbReference>
<dbReference type="EMBL" id="AL022101">
    <property type="status" value="NOT_ANNOTATED_CDS"/>
    <property type="molecule type" value="Genomic_DNA"/>
</dbReference>
<dbReference type="EMBL" id="BC075008">
    <property type="protein sequence ID" value="AAH75008.1"/>
    <property type="molecule type" value="mRNA"/>
</dbReference>
<dbReference type="EMBL" id="BC075009">
    <property type="protein sequence ID" value="AAH75009.1"/>
    <property type="molecule type" value="mRNA"/>
</dbReference>
<dbReference type="CCDS" id="CCDS149.1"/>
<dbReference type="RefSeq" id="NP_075390.1">
    <property type="nucleotide sequence ID" value="NM_023014.1"/>
</dbReference>
<dbReference type="SMR" id="O60811"/>
<dbReference type="BioGRID" id="122400">
    <property type="interactions" value="14"/>
</dbReference>
<dbReference type="FunCoup" id="O60811">
    <property type="interactions" value="12"/>
</dbReference>
<dbReference type="STRING" id="9606.ENSP00000240189"/>
<dbReference type="GlyGen" id="O60811">
    <property type="glycosylation" value="1 site"/>
</dbReference>
<dbReference type="iPTMnet" id="O60811"/>
<dbReference type="PhosphoSitePlus" id="O60811"/>
<dbReference type="BioMuta" id="PRAMEF2"/>
<dbReference type="jPOST" id="O60811"/>
<dbReference type="MassIVE" id="O60811"/>
<dbReference type="PaxDb" id="9606-ENSP00000240189"/>
<dbReference type="PeptideAtlas" id="O60811"/>
<dbReference type="ProteomicsDB" id="49604"/>
<dbReference type="Pumba" id="O60811"/>
<dbReference type="Antibodypedia" id="65449">
    <property type="antibodies" value="65 antibodies from 12 providers"/>
</dbReference>
<dbReference type="DNASU" id="65122"/>
<dbReference type="Ensembl" id="ENST00000240189.2">
    <property type="protein sequence ID" value="ENSP00000240189.2"/>
    <property type="gene ID" value="ENSG00000120952.4"/>
</dbReference>
<dbReference type="Ensembl" id="ENST00000632257.1">
    <property type="protein sequence ID" value="ENSP00000487743.1"/>
    <property type="gene ID" value="ENSG00000282817.1"/>
</dbReference>
<dbReference type="GeneID" id="65122"/>
<dbReference type="KEGG" id="hsa:65122"/>
<dbReference type="MANE-Select" id="ENST00000240189.2">
    <property type="protein sequence ID" value="ENSP00000240189.2"/>
    <property type="RefSeq nucleotide sequence ID" value="NM_023014.1"/>
    <property type="RefSeq protein sequence ID" value="NP_075390.1"/>
</dbReference>
<dbReference type="UCSC" id="uc001aum.1">
    <property type="organism name" value="human"/>
</dbReference>
<dbReference type="AGR" id="HGNC:28841"/>
<dbReference type="CTD" id="65122"/>
<dbReference type="DisGeNET" id="65122"/>
<dbReference type="GeneCards" id="PRAMEF2"/>
<dbReference type="HGNC" id="HGNC:28841">
    <property type="gene designation" value="PRAMEF2"/>
</dbReference>
<dbReference type="HPA" id="ENSG00000120952">
    <property type="expression patterns" value="Not detected"/>
</dbReference>
<dbReference type="neXtProt" id="NX_O60811"/>
<dbReference type="OpenTargets" id="ENSG00000120952"/>
<dbReference type="PharmGKB" id="PA142671139"/>
<dbReference type="VEuPathDB" id="HostDB:ENSG00000120952"/>
<dbReference type="eggNOG" id="ENOG502QWSJ">
    <property type="taxonomic scope" value="Eukaryota"/>
</dbReference>
<dbReference type="GeneTree" id="ENSGT01030000234531"/>
<dbReference type="HOGENOM" id="CLU_039635_2_1_1"/>
<dbReference type="InParanoid" id="O60811"/>
<dbReference type="OMA" id="LEIHNTC"/>
<dbReference type="PAN-GO" id="O60811">
    <property type="GO annotations" value="1 GO annotation based on evolutionary models"/>
</dbReference>
<dbReference type="PhylomeDB" id="O60811"/>
<dbReference type="TreeFam" id="TF332708"/>
<dbReference type="PathwayCommons" id="O60811"/>
<dbReference type="BioGRID-ORCS" id="65122">
    <property type="hits" value="17 hits in 1110 CRISPR screens"/>
</dbReference>
<dbReference type="GenomeRNAi" id="65122"/>
<dbReference type="Pharos" id="O60811">
    <property type="development level" value="Tdark"/>
</dbReference>
<dbReference type="PRO" id="PR:O60811"/>
<dbReference type="Proteomes" id="UP000005640">
    <property type="component" value="Chromosome 1"/>
</dbReference>
<dbReference type="RNAct" id="O60811">
    <property type="molecule type" value="protein"/>
</dbReference>
<dbReference type="GO" id="GO:0031462">
    <property type="term" value="C:Cul2-RING ubiquitin ligase complex"/>
    <property type="evidence" value="ECO:0000318"/>
    <property type="project" value="GO_Central"/>
</dbReference>
<dbReference type="GO" id="GO:0005737">
    <property type="term" value="C:cytoplasm"/>
    <property type="evidence" value="ECO:0000318"/>
    <property type="project" value="GO_Central"/>
</dbReference>
<dbReference type="GO" id="GO:1990756">
    <property type="term" value="F:ubiquitin-like ligase-substrate adaptor activity"/>
    <property type="evidence" value="ECO:0000318"/>
    <property type="project" value="GO_Central"/>
</dbReference>
<dbReference type="GO" id="GO:0043066">
    <property type="term" value="P:negative regulation of apoptotic process"/>
    <property type="evidence" value="ECO:0007669"/>
    <property type="project" value="InterPro"/>
</dbReference>
<dbReference type="GO" id="GO:0045596">
    <property type="term" value="P:negative regulation of cell differentiation"/>
    <property type="evidence" value="ECO:0007669"/>
    <property type="project" value="InterPro"/>
</dbReference>
<dbReference type="GO" id="GO:0045892">
    <property type="term" value="P:negative regulation of DNA-templated transcription"/>
    <property type="evidence" value="ECO:0007669"/>
    <property type="project" value="InterPro"/>
</dbReference>
<dbReference type="GO" id="GO:0008284">
    <property type="term" value="P:positive regulation of cell population proliferation"/>
    <property type="evidence" value="ECO:0007669"/>
    <property type="project" value="InterPro"/>
</dbReference>
<dbReference type="GO" id="GO:0043161">
    <property type="term" value="P:proteasome-mediated ubiquitin-dependent protein catabolic process"/>
    <property type="evidence" value="ECO:0000318"/>
    <property type="project" value="GO_Central"/>
</dbReference>
<dbReference type="FunFam" id="3.80.10.10:FF:000079">
    <property type="entry name" value="PRAME family member 18"/>
    <property type="match status" value="1"/>
</dbReference>
<dbReference type="Gene3D" id="3.80.10.10">
    <property type="entry name" value="Ribonuclease Inhibitor"/>
    <property type="match status" value="1"/>
</dbReference>
<dbReference type="InterPro" id="IPR032675">
    <property type="entry name" value="LRR_dom_sf"/>
</dbReference>
<dbReference type="InterPro" id="IPR026271">
    <property type="entry name" value="PRAME"/>
</dbReference>
<dbReference type="InterPro" id="IPR050694">
    <property type="entry name" value="PRAME_domain"/>
</dbReference>
<dbReference type="PANTHER" id="PTHR14224:SF98">
    <property type="entry name" value="PRAME FAMILY MEMBER 2"/>
    <property type="match status" value="1"/>
</dbReference>
<dbReference type="PANTHER" id="PTHR14224">
    <property type="entry name" value="SIMILAR TO PREFERENTIALLY EXPRESSED ANTIGEN IN MELANOMA-LIKE 3"/>
    <property type="match status" value="1"/>
</dbReference>
<dbReference type="PIRSF" id="PIRSF038286">
    <property type="entry name" value="PRAME"/>
    <property type="match status" value="1"/>
</dbReference>
<dbReference type="SUPFAM" id="SSF52047">
    <property type="entry name" value="RNI-like"/>
    <property type="match status" value="1"/>
</dbReference>
<reference key="1">
    <citation type="submission" date="1999-04" db="EMBL/GenBank/DDBJ databases">
        <authorList>
            <person name="Rhodes S."/>
        </authorList>
    </citation>
    <scope>NUCLEOTIDE SEQUENCE [LARGE SCALE MRNA]</scope>
</reference>
<reference key="2">
    <citation type="journal article" date="2006" name="Nature">
        <title>The DNA sequence and biological annotation of human chromosome 1.</title>
        <authorList>
            <person name="Gregory S.G."/>
            <person name="Barlow K.F."/>
            <person name="McLay K.E."/>
            <person name="Kaul R."/>
            <person name="Swarbreck D."/>
            <person name="Dunham A."/>
            <person name="Scott C.E."/>
            <person name="Howe K.L."/>
            <person name="Woodfine K."/>
            <person name="Spencer C.C.A."/>
            <person name="Jones M.C."/>
            <person name="Gillson C."/>
            <person name="Searle S."/>
            <person name="Zhou Y."/>
            <person name="Kokocinski F."/>
            <person name="McDonald L."/>
            <person name="Evans R."/>
            <person name="Phillips K."/>
            <person name="Atkinson A."/>
            <person name="Cooper R."/>
            <person name="Jones C."/>
            <person name="Hall R.E."/>
            <person name="Andrews T.D."/>
            <person name="Lloyd C."/>
            <person name="Ainscough R."/>
            <person name="Almeida J.P."/>
            <person name="Ambrose K.D."/>
            <person name="Anderson F."/>
            <person name="Andrew R.W."/>
            <person name="Ashwell R.I.S."/>
            <person name="Aubin K."/>
            <person name="Babbage A.K."/>
            <person name="Bagguley C.L."/>
            <person name="Bailey J."/>
            <person name="Beasley H."/>
            <person name="Bethel G."/>
            <person name="Bird C.P."/>
            <person name="Bray-Allen S."/>
            <person name="Brown J.Y."/>
            <person name="Brown A.J."/>
            <person name="Buckley D."/>
            <person name="Burton J."/>
            <person name="Bye J."/>
            <person name="Carder C."/>
            <person name="Chapman J.C."/>
            <person name="Clark S.Y."/>
            <person name="Clarke G."/>
            <person name="Clee C."/>
            <person name="Cobley V."/>
            <person name="Collier R.E."/>
            <person name="Corby N."/>
            <person name="Coville G.J."/>
            <person name="Davies J."/>
            <person name="Deadman R."/>
            <person name="Dunn M."/>
            <person name="Earthrowl M."/>
            <person name="Ellington A.G."/>
            <person name="Errington H."/>
            <person name="Frankish A."/>
            <person name="Frankland J."/>
            <person name="French L."/>
            <person name="Garner P."/>
            <person name="Garnett J."/>
            <person name="Gay L."/>
            <person name="Ghori M.R.J."/>
            <person name="Gibson R."/>
            <person name="Gilby L.M."/>
            <person name="Gillett W."/>
            <person name="Glithero R.J."/>
            <person name="Grafham D.V."/>
            <person name="Griffiths C."/>
            <person name="Griffiths-Jones S."/>
            <person name="Grocock R."/>
            <person name="Hammond S."/>
            <person name="Harrison E.S.I."/>
            <person name="Hart E."/>
            <person name="Haugen E."/>
            <person name="Heath P.D."/>
            <person name="Holmes S."/>
            <person name="Holt K."/>
            <person name="Howden P.J."/>
            <person name="Hunt A.R."/>
            <person name="Hunt S.E."/>
            <person name="Hunter G."/>
            <person name="Isherwood J."/>
            <person name="James R."/>
            <person name="Johnson C."/>
            <person name="Johnson D."/>
            <person name="Joy A."/>
            <person name="Kay M."/>
            <person name="Kershaw J.K."/>
            <person name="Kibukawa M."/>
            <person name="Kimberley A.M."/>
            <person name="King A."/>
            <person name="Knights A.J."/>
            <person name="Lad H."/>
            <person name="Laird G."/>
            <person name="Lawlor S."/>
            <person name="Leongamornlert D.A."/>
            <person name="Lloyd D.M."/>
            <person name="Loveland J."/>
            <person name="Lovell J."/>
            <person name="Lush M.J."/>
            <person name="Lyne R."/>
            <person name="Martin S."/>
            <person name="Mashreghi-Mohammadi M."/>
            <person name="Matthews L."/>
            <person name="Matthews N.S.W."/>
            <person name="McLaren S."/>
            <person name="Milne S."/>
            <person name="Mistry S."/>
            <person name="Moore M.J.F."/>
            <person name="Nickerson T."/>
            <person name="O'Dell C.N."/>
            <person name="Oliver K."/>
            <person name="Palmeiri A."/>
            <person name="Palmer S.A."/>
            <person name="Parker A."/>
            <person name="Patel D."/>
            <person name="Pearce A.V."/>
            <person name="Peck A.I."/>
            <person name="Pelan S."/>
            <person name="Phelps K."/>
            <person name="Phillimore B.J."/>
            <person name="Plumb R."/>
            <person name="Rajan J."/>
            <person name="Raymond C."/>
            <person name="Rouse G."/>
            <person name="Saenphimmachak C."/>
            <person name="Sehra H.K."/>
            <person name="Sheridan E."/>
            <person name="Shownkeen R."/>
            <person name="Sims S."/>
            <person name="Skuce C.D."/>
            <person name="Smith M."/>
            <person name="Steward C."/>
            <person name="Subramanian S."/>
            <person name="Sycamore N."/>
            <person name="Tracey A."/>
            <person name="Tromans A."/>
            <person name="Van Helmond Z."/>
            <person name="Wall M."/>
            <person name="Wallis J.M."/>
            <person name="White S."/>
            <person name="Whitehead S.L."/>
            <person name="Wilkinson J.E."/>
            <person name="Willey D.L."/>
            <person name="Williams H."/>
            <person name="Wilming L."/>
            <person name="Wray P.W."/>
            <person name="Wu Z."/>
            <person name="Coulson A."/>
            <person name="Vaudin M."/>
            <person name="Sulston J.E."/>
            <person name="Durbin R.M."/>
            <person name="Hubbard T."/>
            <person name="Wooster R."/>
            <person name="Dunham I."/>
            <person name="Carter N.P."/>
            <person name="McVean G."/>
            <person name="Ross M.T."/>
            <person name="Harrow J."/>
            <person name="Olson M.V."/>
            <person name="Beck S."/>
            <person name="Rogers J."/>
            <person name="Bentley D.R."/>
        </authorList>
    </citation>
    <scope>NUCLEOTIDE SEQUENCE [LARGE SCALE GENOMIC DNA]</scope>
</reference>
<reference key="3">
    <citation type="journal article" date="2004" name="Genome Res.">
        <title>The status, quality, and expansion of the NIH full-length cDNA project: the Mammalian Gene Collection (MGC).</title>
        <authorList>
            <consortium name="The MGC Project Team"/>
        </authorList>
    </citation>
    <scope>NUCLEOTIDE SEQUENCE [LARGE SCALE MRNA]</scope>
</reference>
<comment type="similarity">
    <text evidence="2">Belongs to the PRAME family.</text>
</comment>
<proteinExistence type="evidence at transcript level"/>
<feature type="chain" id="PRO_0000156976" description="PRAME family member 2">
    <location>
        <begin position="1"/>
        <end position="474"/>
    </location>
</feature>
<feature type="repeat" description="LRR 1; degenerate" evidence="1">
    <location>
        <begin position="97"/>
        <end position="124"/>
    </location>
</feature>
<feature type="repeat" description="LRR 2; degenerate" evidence="1">
    <location>
        <begin position="179"/>
        <end position="203"/>
    </location>
</feature>
<feature type="repeat" description="LRR 3; degenerate" evidence="1">
    <location>
        <begin position="204"/>
        <end position="230"/>
    </location>
</feature>
<feature type="repeat" description="LRR 4; degenerate" evidence="1">
    <location>
        <begin position="231"/>
        <end position="265"/>
    </location>
</feature>
<feature type="repeat" description="LRR 5" evidence="1">
    <location>
        <begin position="266"/>
        <end position="291"/>
    </location>
</feature>
<feature type="repeat" description="LRR 6" evidence="1">
    <location>
        <begin position="292"/>
        <end position="323"/>
    </location>
</feature>
<feature type="repeat" description="LRR 7" evidence="1">
    <location>
        <begin position="324"/>
        <end position="342"/>
    </location>
</feature>
<feature type="repeat" description="LRR 8" evidence="1">
    <location>
        <begin position="348"/>
        <end position="375"/>
    </location>
</feature>
<feature type="repeat" description="LRR 9" evidence="1">
    <location>
        <begin position="376"/>
        <end position="400"/>
    </location>
</feature>
<feature type="sequence variant" id="VAR_060093" description="In dbSNP:rs9661554.">
    <original>R</original>
    <variation>S</variation>
    <location>
        <position position="33"/>
    </location>
</feature>
<feature type="sequence variant" id="VAR_034400" description="In dbSNP:rs3204790.">
    <original>V</original>
    <variation>G</variation>
    <location>
        <position position="67"/>
    </location>
</feature>
<feature type="sequence variant" id="VAR_034401" description="In dbSNP:rs17038657.">
    <original>S</original>
    <variation>W</variation>
    <location>
        <position position="68"/>
    </location>
</feature>
<feature type="sequence variant" id="VAR_034402" description="In dbSNP:rs9659529.">
    <original>T</original>
    <variation>R</variation>
    <location>
        <position position="72"/>
    </location>
</feature>
<feature type="sequence variant" id="VAR_053606" description="In dbSNP:rs9728577.">
    <original>E</original>
    <variation>K</variation>
    <location>
        <position position="83"/>
    </location>
</feature>
<feature type="sequence variant" id="VAR_034403" description="In dbSNP:rs142476002.">
    <original>A</original>
    <variation>T</variation>
    <location>
        <position position="128"/>
    </location>
</feature>
<feature type="sequence variant" id="VAR_034404" description="In dbSNP:rs17038667.">
    <original>T</original>
    <variation>M</variation>
    <location>
        <position position="141"/>
    </location>
</feature>
<feature type="sequence variant" id="VAR_034405" description="In dbSNP:rs3204805.">
    <original>Y</original>
    <variation>C</variation>
    <location>
        <position position="225"/>
    </location>
</feature>
<feature type="sequence variant" id="VAR_034406" description="In dbSNP:rs17038692.">
    <original>T</original>
    <variation>N</variation>
    <location>
        <position position="233"/>
    </location>
</feature>
<feature type="sequence variant" id="VAR_034407" description="In dbSNP:rs12139546.">
    <original>T</original>
    <variation>A</variation>
    <location>
        <position position="301"/>
    </location>
</feature>
<feature type="sequence variant" id="VAR_034408" description="In dbSNP:rs17404799.">
    <original>C</original>
    <variation>Y</variation>
    <location>
        <position position="302"/>
    </location>
</feature>
<feature type="sequence variant" id="VAR_034409" description="In dbSNP:rs1063784.">
    <original>N</original>
    <variation>Y</variation>
    <location>
        <position position="304"/>
    </location>
</feature>
<feature type="sequence variant" id="VAR_034410" description="In dbSNP:rs12139550.">
    <original>E</original>
    <variation>G</variation>
    <location>
        <position position="308"/>
    </location>
</feature>
<feature type="sequence variant" id="VAR_034411" description="In dbSNP:rs1063787.">
    <original>L</original>
    <variation>M</variation>
    <location>
        <position position="310"/>
    </location>
</feature>
<feature type="sequence variant" id="VAR_034412" description="In dbSNP:rs1063788.">
    <original>F</original>
    <variation>Y</variation>
    <location>
        <position position="316"/>
    </location>
</feature>
<feature type="sequence variant" id="VAR_034413" description="In dbSNP:rs1063796.">
    <original>C</original>
    <variation>R</variation>
    <location>
        <position position="375"/>
    </location>
</feature>
<evidence type="ECO:0000250" key="1">
    <source>
        <dbReference type="UniProtKB" id="Q3UWY1"/>
    </source>
</evidence>
<evidence type="ECO:0000305" key="2"/>
<evidence type="ECO:0000312" key="3">
    <source>
        <dbReference type="HGNC" id="HGNC:28841"/>
    </source>
</evidence>
<name>PRAM2_HUMAN</name>
<organism>
    <name type="scientific">Homo sapiens</name>
    <name type="common">Human</name>
    <dbReference type="NCBI Taxonomy" id="9606"/>
    <lineage>
        <taxon>Eukaryota</taxon>
        <taxon>Metazoa</taxon>
        <taxon>Chordata</taxon>
        <taxon>Craniata</taxon>
        <taxon>Vertebrata</taxon>
        <taxon>Euteleostomi</taxon>
        <taxon>Mammalia</taxon>
        <taxon>Eutheria</taxon>
        <taxon>Euarchontoglires</taxon>
        <taxon>Primates</taxon>
        <taxon>Haplorrhini</taxon>
        <taxon>Catarrhini</taxon>
        <taxon>Hominidae</taxon>
        <taxon>Homo</taxon>
    </lineage>
</organism>